<gene>
    <name type="primary">bub2</name>
    <name type="ORF">DDB_G0268794</name>
</gene>
<feature type="chain" id="PRO_0000365596" description="Putative mitotic check point protein BUB2">
    <location>
        <begin position="1"/>
        <end position="366"/>
    </location>
</feature>
<feature type="domain" description="Rab-GAP TBC" evidence="2">
    <location>
        <begin position="63"/>
        <end position="244"/>
    </location>
</feature>
<feature type="region of interest" description="Disordered" evidence="3">
    <location>
        <begin position="314"/>
        <end position="366"/>
    </location>
</feature>
<feature type="compositionally biased region" description="Acidic residues" evidence="3">
    <location>
        <begin position="332"/>
        <end position="354"/>
    </location>
</feature>
<sequence>MVIKDLSPHNNSLRKKYLDLIDYGNKNPLTVDPNLYQLRKTILLEGLPPETEEEIEDRTKQDGSKCSLRGMIWKILLGVDKIQPDKYIELIEKGPSNRYQKIRKDIGRTFNRDSQFSQAVSQDQLSRCLNAFAHQCEELGYVQGMNAICGTFLYVLPEVEAFQCFYSLLTQCCPNYFTSNISGVNDASKLLDRILEFVDPELYEYLQNRSYHPLLFTPPILSLGTATPPLDELLKLWDFFLAFGFHLNVICTISQILLMRDVLLVHQSPCLLFRSFPELDAPTIINLSIHIIRQLPDDIYDLLVDHPMTSVDLTPFDRDPNNLNSFNGSGEFDNDNDNDNGNQDEEDDDDDDIDDGHNDYFNDNDE</sequence>
<dbReference type="EMBL" id="AAFI02000004">
    <property type="protein sequence ID" value="EAL72986.1"/>
    <property type="molecule type" value="Genomic_DNA"/>
</dbReference>
<dbReference type="RefSeq" id="XP_646971.1">
    <property type="nucleotide sequence ID" value="XM_641879.1"/>
</dbReference>
<dbReference type="SMR" id="Q55EP9"/>
<dbReference type="STRING" id="44689.Q55EP9"/>
<dbReference type="PaxDb" id="44689-DDB0232237"/>
<dbReference type="EnsemblProtists" id="EAL72986">
    <property type="protein sequence ID" value="EAL72986"/>
    <property type="gene ID" value="DDB_G0268794"/>
</dbReference>
<dbReference type="GeneID" id="8616663"/>
<dbReference type="KEGG" id="ddi:DDB_G0268794"/>
<dbReference type="dictyBase" id="DDB_G0268794">
    <property type="gene designation" value="bub2"/>
</dbReference>
<dbReference type="VEuPathDB" id="AmoebaDB:DDB_G0268794"/>
<dbReference type="eggNOG" id="KOG2058">
    <property type="taxonomic scope" value="Eukaryota"/>
</dbReference>
<dbReference type="HOGENOM" id="CLU_029367_2_0_1"/>
<dbReference type="InParanoid" id="Q55EP9"/>
<dbReference type="OMA" id="CHKSEPQ"/>
<dbReference type="PhylomeDB" id="Q55EP9"/>
<dbReference type="PRO" id="PR:Q55EP9"/>
<dbReference type="Proteomes" id="UP000002195">
    <property type="component" value="Chromosome 1"/>
</dbReference>
<dbReference type="GO" id="GO:0005737">
    <property type="term" value="C:cytoplasm"/>
    <property type="evidence" value="ECO:0007669"/>
    <property type="project" value="UniProtKB-KW"/>
</dbReference>
<dbReference type="GO" id="GO:0005819">
    <property type="term" value="C:spindle"/>
    <property type="evidence" value="ECO:0007669"/>
    <property type="project" value="UniProtKB-SubCell"/>
</dbReference>
<dbReference type="GO" id="GO:0005096">
    <property type="term" value="F:GTPase activator activity"/>
    <property type="evidence" value="ECO:0000318"/>
    <property type="project" value="GO_Central"/>
</dbReference>
<dbReference type="GO" id="GO:0051301">
    <property type="term" value="P:cell division"/>
    <property type="evidence" value="ECO:0007669"/>
    <property type="project" value="UniProtKB-KW"/>
</dbReference>
<dbReference type="FunFam" id="1.10.472.80:FF:000183">
    <property type="match status" value="1"/>
</dbReference>
<dbReference type="FunFam" id="1.10.8.270:FF:000035">
    <property type="entry name" value="Cell cycle arrest protein BUB2"/>
    <property type="match status" value="1"/>
</dbReference>
<dbReference type="Gene3D" id="1.10.8.270">
    <property type="entry name" value="putative rabgap domain of human tbc1 domain family member 14 like domains"/>
    <property type="match status" value="1"/>
</dbReference>
<dbReference type="Gene3D" id="1.10.472.80">
    <property type="entry name" value="Ypt/Rab-GAP domain of gyp1p, domain 3"/>
    <property type="match status" value="1"/>
</dbReference>
<dbReference type="InterPro" id="IPR000195">
    <property type="entry name" value="Rab-GAP-TBC_dom"/>
</dbReference>
<dbReference type="InterPro" id="IPR035969">
    <property type="entry name" value="Rab-GAP_TBC_sf"/>
</dbReference>
<dbReference type="PANTHER" id="PTHR22957:SF263">
    <property type="entry name" value="MITOTIC CHECK POINT PROTEIN BUB2"/>
    <property type="match status" value="1"/>
</dbReference>
<dbReference type="PANTHER" id="PTHR22957">
    <property type="entry name" value="TBC1 DOMAIN FAMILY MEMBER GTPASE-ACTIVATING PROTEIN"/>
    <property type="match status" value="1"/>
</dbReference>
<dbReference type="Pfam" id="PF00566">
    <property type="entry name" value="RabGAP-TBC"/>
    <property type="match status" value="1"/>
</dbReference>
<dbReference type="SMART" id="SM00164">
    <property type="entry name" value="TBC"/>
    <property type="match status" value="1"/>
</dbReference>
<dbReference type="SUPFAM" id="SSF47923">
    <property type="entry name" value="Ypt/Rab-GAP domain of gyp1p"/>
    <property type="match status" value="2"/>
</dbReference>
<dbReference type="PROSITE" id="PS50086">
    <property type="entry name" value="TBC_RABGAP"/>
    <property type="match status" value="1"/>
</dbReference>
<evidence type="ECO:0000250" key="1"/>
<evidence type="ECO:0000255" key="2">
    <source>
        <dbReference type="PROSITE-ProRule" id="PRU00163"/>
    </source>
</evidence>
<evidence type="ECO:0000256" key="3">
    <source>
        <dbReference type="SAM" id="MobiDB-lite"/>
    </source>
</evidence>
<evidence type="ECO:0000305" key="4"/>
<accession>Q55EP9</accession>
<name>BUB2_DICDI</name>
<keyword id="KW-0131">Cell cycle</keyword>
<keyword id="KW-0132">Cell division</keyword>
<keyword id="KW-0963">Cytoplasm</keyword>
<keyword id="KW-0206">Cytoskeleton</keyword>
<keyword id="KW-0498">Mitosis</keyword>
<keyword id="KW-1185">Reference proteome</keyword>
<comment type="function">
    <text evidence="1">Part of a checkpoint which monitors spindle integrity and prevents premature exit from mitosis.</text>
</comment>
<comment type="subcellular location">
    <subcellularLocation>
        <location evidence="1">Cytoplasm</location>
        <location evidence="1">Cytoskeleton</location>
        <location evidence="1">Spindle</location>
    </subcellularLocation>
</comment>
<comment type="similarity">
    <text evidence="4">Belongs to the BUB2 family.</text>
</comment>
<reference key="1">
    <citation type="journal article" date="2005" name="Nature">
        <title>The genome of the social amoeba Dictyostelium discoideum.</title>
        <authorList>
            <person name="Eichinger L."/>
            <person name="Pachebat J.A."/>
            <person name="Gloeckner G."/>
            <person name="Rajandream M.A."/>
            <person name="Sucgang R."/>
            <person name="Berriman M."/>
            <person name="Song J."/>
            <person name="Olsen R."/>
            <person name="Szafranski K."/>
            <person name="Xu Q."/>
            <person name="Tunggal B."/>
            <person name="Kummerfeld S."/>
            <person name="Madera M."/>
            <person name="Konfortov B.A."/>
            <person name="Rivero F."/>
            <person name="Bankier A.T."/>
            <person name="Lehmann R."/>
            <person name="Hamlin N."/>
            <person name="Davies R."/>
            <person name="Gaudet P."/>
            <person name="Fey P."/>
            <person name="Pilcher K."/>
            <person name="Chen G."/>
            <person name="Saunders D."/>
            <person name="Sodergren E.J."/>
            <person name="Davis P."/>
            <person name="Kerhornou A."/>
            <person name="Nie X."/>
            <person name="Hall N."/>
            <person name="Anjard C."/>
            <person name="Hemphill L."/>
            <person name="Bason N."/>
            <person name="Farbrother P."/>
            <person name="Desany B."/>
            <person name="Just E."/>
            <person name="Morio T."/>
            <person name="Rost R."/>
            <person name="Churcher C.M."/>
            <person name="Cooper J."/>
            <person name="Haydock S."/>
            <person name="van Driessche N."/>
            <person name="Cronin A."/>
            <person name="Goodhead I."/>
            <person name="Muzny D.M."/>
            <person name="Mourier T."/>
            <person name="Pain A."/>
            <person name="Lu M."/>
            <person name="Harper D."/>
            <person name="Lindsay R."/>
            <person name="Hauser H."/>
            <person name="James K.D."/>
            <person name="Quiles M."/>
            <person name="Madan Babu M."/>
            <person name="Saito T."/>
            <person name="Buchrieser C."/>
            <person name="Wardroper A."/>
            <person name="Felder M."/>
            <person name="Thangavelu M."/>
            <person name="Johnson D."/>
            <person name="Knights A."/>
            <person name="Loulseged H."/>
            <person name="Mungall K.L."/>
            <person name="Oliver K."/>
            <person name="Price C."/>
            <person name="Quail M.A."/>
            <person name="Urushihara H."/>
            <person name="Hernandez J."/>
            <person name="Rabbinowitsch E."/>
            <person name="Steffen D."/>
            <person name="Sanders M."/>
            <person name="Ma J."/>
            <person name="Kohara Y."/>
            <person name="Sharp S."/>
            <person name="Simmonds M.N."/>
            <person name="Spiegler S."/>
            <person name="Tivey A."/>
            <person name="Sugano S."/>
            <person name="White B."/>
            <person name="Walker D."/>
            <person name="Woodward J.R."/>
            <person name="Winckler T."/>
            <person name="Tanaka Y."/>
            <person name="Shaulsky G."/>
            <person name="Schleicher M."/>
            <person name="Weinstock G.M."/>
            <person name="Rosenthal A."/>
            <person name="Cox E.C."/>
            <person name="Chisholm R.L."/>
            <person name="Gibbs R.A."/>
            <person name="Loomis W.F."/>
            <person name="Platzer M."/>
            <person name="Kay R.R."/>
            <person name="Williams J.G."/>
            <person name="Dear P.H."/>
            <person name="Noegel A.A."/>
            <person name="Barrell B.G."/>
            <person name="Kuspa A."/>
        </authorList>
    </citation>
    <scope>NUCLEOTIDE SEQUENCE [LARGE SCALE GENOMIC DNA]</scope>
    <source>
        <strain>AX4</strain>
    </source>
</reference>
<organism>
    <name type="scientific">Dictyostelium discoideum</name>
    <name type="common">Social amoeba</name>
    <dbReference type="NCBI Taxonomy" id="44689"/>
    <lineage>
        <taxon>Eukaryota</taxon>
        <taxon>Amoebozoa</taxon>
        <taxon>Evosea</taxon>
        <taxon>Eumycetozoa</taxon>
        <taxon>Dictyostelia</taxon>
        <taxon>Dictyosteliales</taxon>
        <taxon>Dictyosteliaceae</taxon>
        <taxon>Dictyostelium</taxon>
    </lineage>
</organism>
<protein>
    <recommendedName>
        <fullName>Putative mitotic check point protein BUB2</fullName>
    </recommendedName>
</protein>
<proteinExistence type="inferred from homology"/>